<accession>P48710</accession>
<sequence length="440" mass="48803">VGFKAGVRDYRLTYYTPEYKTKDTDILAAFRMTPQPGVPAEEAGAAVAAESSTGTWTTVWTDGLTSLDRYKGRCYDIEPVAGEENQYIAYVAYPLDLFEEGSVTNLFTSIVGNVFGFKALRALRLEDLRIPPAYSKTFIGPPHGIQVERDKLNKYGRPLLGCTIKPKLGLSAKNYGRAVYECLRGGLDFTKDDENVNSQPFMRWRDRFLFVAEALFKSQAETGEIKGHYLNATAGTCEEMLKRAAFARELGAPIVMHDYLTGGFTANTSLAFYCRDNGLLLHIHRAMHAVIDRQRNHGMHFRVLAKALRMSGGDHIHAGTVVGKLEGEREVTLGFVDLLRDDYIEKDRSRGIYFTQDWVSMPGVLPVASGGIHVWHMPALTEIFGDDSVLQFGGGTLGHPWGNAPGAVANRVALEACVQARNEGRDLAREGNEIIRERSK</sequence>
<gene>
    <name evidence="1" type="primary">rbcL</name>
</gene>
<proteinExistence type="inferred from homology"/>
<organism>
    <name type="scientific">Onoclea sensibilis</name>
    <name type="common">Sensitive fern</name>
    <dbReference type="NCBI Taxonomy" id="3281"/>
    <lineage>
        <taxon>Eukaryota</taxon>
        <taxon>Viridiplantae</taxon>
        <taxon>Streptophyta</taxon>
        <taxon>Embryophyta</taxon>
        <taxon>Tracheophyta</taxon>
        <taxon>Polypodiopsida</taxon>
        <taxon>Polypodiidae</taxon>
        <taxon>Polypodiales</taxon>
        <taxon>Aspleniineae</taxon>
        <taxon>Onocleaceae</taxon>
        <taxon>Onoclea</taxon>
    </lineage>
</organism>
<protein>
    <recommendedName>
        <fullName evidence="1">Ribulose bisphosphate carboxylase large chain</fullName>
        <shortName evidence="1">RuBisCO large subunit</shortName>
        <ecNumber evidence="1">4.1.1.39</ecNumber>
    </recommendedName>
</protein>
<comment type="function">
    <text evidence="1">RuBisCO catalyzes two reactions: the carboxylation of D-ribulose 1,5-bisphosphate, the primary event in carbon dioxide fixation, as well as the oxidative fragmentation of the pentose substrate in the photorespiration process. Both reactions occur simultaneously and in competition at the same active site.</text>
</comment>
<comment type="catalytic activity">
    <reaction evidence="1">
        <text>2 (2R)-3-phosphoglycerate + 2 H(+) = D-ribulose 1,5-bisphosphate + CO2 + H2O</text>
        <dbReference type="Rhea" id="RHEA:23124"/>
        <dbReference type="ChEBI" id="CHEBI:15377"/>
        <dbReference type="ChEBI" id="CHEBI:15378"/>
        <dbReference type="ChEBI" id="CHEBI:16526"/>
        <dbReference type="ChEBI" id="CHEBI:57870"/>
        <dbReference type="ChEBI" id="CHEBI:58272"/>
        <dbReference type="EC" id="4.1.1.39"/>
    </reaction>
</comment>
<comment type="catalytic activity">
    <reaction evidence="1">
        <text>D-ribulose 1,5-bisphosphate + O2 = 2-phosphoglycolate + (2R)-3-phosphoglycerate + 2 H(+)</text>
        <dbReference type="Rhea" id="RHEA:36631"/>
        <dbReference type="ChEBI" id="CHEBI:15378"/>
        <dbReference type="ChEBI" id="CHEBI:15379"/>
        <dbReference type="ChEBI" id="CHEBI:57870"/>
        <dbReference type="ChEBI" id="CHEBI:58033"/>
        <dbReference type="ChEBI" id="CHEBI:58272"/>
    </reaction>
</comment>
<comment type="cofactor">
    <cofactor evidence="1">
        <name>Mg(2+)</name>
        <dbReference type="ChEBI" id="CHEBI:18420"/>
    </cofactor>
    <text evidence="1">Binds 1 Mg(2+) ion per subunit.</text>
</comment>
<comment type="subunit">
    <text evidence="1">Heterohexadecamer of 8 large chains and 8 small chains; disulfide-linked. The disulfide link is formed within the large subunit homodimers.</text>
</comment>
<comment type="subcellular location">
    <subcellularLocation>
        <location>Plastid</location>
        <location>Chloroplast</location>
    </subcellularLocation>
</comment>
<comment type="PTM">
    <text evidence="1">The disulfide bond which can form in the large chain dimeric partners within the hexadecamer appears to be associated with oxidative stress and protein turnover.</text>
</comment>
<comment type="miscellaneous">
    <text evidence="1">The basic functional RuBisCO is composed of a large chain homodimer in a 'head-to-tail' conformation. In form I RuBisCO this homodimer is arranged in a barrel-like tetramer with the small subunits forming a tetrameric 'cap' on each end of the 'barrel'.</text>
</comment>
<comment type="similarity">
    <text evidence="1">Belongs to the RuBisCO large chain family. Type I subfamily.</text>
</comment>
<reference key="1">
    <citation type="journal article" date="1994" name="Mol. Phylogenet. Evol.">
        <title>Phylogenetic relationships of dennstaedtioid ferns: evidence from rbcL sequences.</title>
        <authorList>
            <person name="Wolf P.G."/>
            <person name="Soltis P.S."/>
            <person name="Soltis D.E."/>
        </authorList>
    </citation>
    <scope>NUCLEOTIDE SEQUENCE [GENOMIC DNA]</scope>
    <source>
        <tissue>Leaf</tissue>
    </source>
</reference>
<reference key="2">
    <citation type="journal article" date="1994" name="Proc. Natl. Acad. Sci. U.S.A.">
        <title>rbcL gene sequences provide evidence for the evolutionary lineages of leptosporangiate ferns.</title>
        <authorList>
            <person name="Hasebe M."/>
            <person name="Omori T."/>
            <person name="Nakazawa M."/>
            <person name="Sano T."/>
            <person name="Kato M."/>
            <person name="Iwatsuki K."/>
        </authorList>
    </citation>
    <scope>NUCLEOTIDE SEQUENCE [GENOMIC DNA] OF 13-426</scope>
    <source>
        <tissue>Leaf</tissue>
    </source>
</reference>
<evidence type="ECO:0000255" key="1">
    <source>
        <dbReference type="HAMAP-Rule" id="MF_01338"/>
    </source>
</evidence>
<feature type="chain" id="PRO_0000062550" description="Ribulose bisphosphate carboxylase large chain">
    <location>
        <begin position="1" status="less than"/>
        <end position="440" status="greater than"/>
    </location>
</feature>
<feature type="active site" description="Proton acceptor" evidence="1">
    <location>
        <position position="165"/>
    </location>
</feature>
<feature type="active site" description="Proton acceptor" evidence="1">
    <location>
        <position position="284"/>
    </location>
</feature>
<feature type="binding site" description="in homodimeric partner" evidence="1">
    <location>
        <position position="113"/>
    </location>
    <ligand>
        <name>substrate</name>
    </ligand>
</feature>
<feature type="binding site" evidence="1">
    <location>
        <position position="163"/>
    </location>
    <ligand>
        <name>substrate</name>
    </ligand>
</feature>
<feature type="binding site" evidence="1">
    <location>
        <position position="167"/>
    </location>
    <ligand>
        <name>substrate</name>
    </ligand>
</feature>
<feature type="binding site" description="via carbamate group" evidence="1">
    <location>
        <position position="191"/>
    </location>
    <ligand>
        <name>Mg(2+)</name>
        <dbReference type="ChEBI" id="CHEBI:18420"/>
    </ligand>
</feature>
<feature type="binding site" evidence="1">
    <location>
        <position position="193"/>
    </location>
    <ligand>
        <name>Mg(2+)</name>
        <dbReference type="ChEBI" id="CHEBI:18420"/>
    </ligand>
</feature>
<feature type="binding site" evidence="1">
    <location>
        <position position="194"/>
    </location>
    <ligand>
        <name>Mg(2+)</name>
        <dbReference type="ChEBI" id="CHEBI:18420"/>
    </ligand>
</feature>
<feature type="binding site" evidence="1">
    <location>
        <position position="285"/>
    </location>
    <ligand>
        <name>substrate</name>
    </ligand>
</feature>
<feature type="binding site" evidence="1">
    <location>
        <position position="317"/>
    </location>
    <ligand>
        <name>substrate</name>
    </ligand>
</feature>
<feature type="binding site" evidence="1">
    <location>
        <position position="369"/>
    </location>
    <ligand>
        <name>substrate</name>
    </ligand>
</feature>
<feature type="site" description="Transition state stabilizer" evidence="1">
    <location>
        <position position="324"/>
    </location>
</feature>
<feature type="modified residue" description="N6,N6,N6-trimethyllysine" evidence="1">
    <location>
        <position position="4"/>
    </location>
</feature>
<feature type="modified residue" description="N6-carboxylysine" evidence="1">
    <location>
        <position position="191"/>
    </location>
</feature>
<feature type="disulfide bond" description="Interchain; in linked form" evidence="1">
    <location>
        <position position="237"/>
    </location>
</feature>
<feature type="non-terminal residue">
    <location>
        <position position="1"/>
    </location>
</feature>
<feature type="non-terminal residue">
    <location>
        <position position="440"/>
    </location>
</feature>
<dbReference type="EC" id="4.1.1.39" evidence="1"/>
<dbReference type="EMBL" id="U05936">
    <property type="protein sequence ID" value="AAC48961.1"/>
    <property type="molecule type" value="Genomic_DNA"/>
</dbReference>
<dbReference type="EMBL" id="U05640">
    <property type="protein sequence ID" value="AAA19989.1"/>
    <property type="molecule type" value="Genomic_DNA"/>
</dbReference>
<dbReference type="SMR" id="P48710"/>
<dbReference type="GO" id="GO:0009507">
    <property type="term" value="C:chloroplast"/>
    <property type="evidence" value="ECO:0007669"/>
    <property type="project" value="UniProtKB-SubCell"/>
</dbReference>
<dbReference type="GO" id="GO:0000287">
    <property type="term" value="F:magnesium ion binding"/>
    <property type="evidence" value="ECO:0007669"/>
    <property type="project" value="InterPro"/>
</dbReference>
<dbReference type="GO" id="GO:0004497">
    <property type="term" value="F:monooxygenase activity"/>
    <property type="evidence" value="ECO:0007669"/>
    <property type="project" value="UniProtKB-KW"/>
</dbReference>
<dbReference type="GO" id="GO:0016984">
    <property type="term" value="F:ribulose-bisphosphate carboxylase activity"/>
    <property type="evidence" value="ECO:0007669"/>
    <property type="project" value="UniProtKB-EC"/>
</dbReference>
<dbReference type="GO" id="GO:0009853">
    <property type="term" value="P:photorespiration"/>
    <property type="evidence" value="ECO:0007669"/>
    <property type="project" value="UniProtKB-KW"/>
</dbReference>
<dbReference type="GO" id="GO:0019253">
    <property type="term" value="P:reductive pentose-phosphate cycle"/>
    <property type="evidence" value="ECO:0007669"/>
    <property type="project" value="UniProtKB-KW"/>
</dbReference>
<dbReference type="CDD" id="cd08212">
    <property type="entry name" value="RuBisCO_large_I"/>
    <property type="match status" value="1"/>
</dbReference>
<dbReference type="FunFam" id="3.20.20.110:FF:000003">
    <property type="entry name" value="Ribulose bisphosphate carboxylase large chain"/>
    <property type="match status" value="1"/>
</dbReference>
<dbReference type="FunFam" id="3.30.70.150:FF:000001">
    <property type="entry name" value="Ribulose bisphosphate carboxylase large chain"/>
    <property type="match status" value="1"/>
</dbReference>
<dbReference type="Gene3D" id="3.20.20.110">
    <property type="entry name" value="Ribulose bisphosphate carboxylase, large subunit, C-terminal domain"/>
    <property type="match status" value="1"/>
</dbReference>
<dbReference type="Gene3D" id="3.30.70.150">
    <property type="entry name" value="RuBisCO large subunit, N-terminal domain"/>
    <property type="match status" value="1"/>
</dbReference>
<dbReference type="HAMAP" id="MF_01338">
    <property type="entry name" value="RuBisCO_L_type1"/>
    <property type="match status" value="1"/>
</dbReference>
<dbReference type="InterPro" id="IPR033966">
    <property type="entry name" value="RuBisCO"/>
</dbReference>
<dbReference type="InterPro" id="IPR020878">
    <property type="entry name" value="RuBisCo_large_chain_AS"/>
</dbReference>
<dbReference type="InterPro" id="IPR000685">
    <property type="entry name" value="RuBisCO_lsu_C"/>
</dbReference>
<dbReference type="InterPro" id="IPR036376">
    <property type="entry name" value="RuBisCO_lsu_C_sf"/>
</dbReference>
<dbReference type="InterPro" id="IPR017443">
    <property type="entry name" value="RuBisCO_lsu_fd_N"/>
</dbReference>
<dbReference type="InterPro" id="IPR036422">
    <property type="entry name" value="RuBisCO_lsu_N_sf"/>
</dbReference>
<dbReference type="InterPro" id="IPR020888">
    <property type="entry name" value="RuBisCO_lsuI"/>
</dbReference>
<dbReference type="NCBIfam" id="NF003252">
    <property type="entry name" value="PRK04208.1"/>
    <property type="match status" value="1"/>
</dbReference>
<dbReference type="PANTHER" id="PTHR42704">
    <property type="entry name" value="RIBULOSE BISPHOSPHATE CARBOXYLASE"/>
    <property type="match status" value="1"/>
</dbReference>
<dbReference type="PANTHER" id="PTHR42704:SF17">
    <property type="entry name" value="RIBULOSE BISPHOSPHATE CARBOXYLASE LARGE CHAIN"/>
    <property type="match status" value="1"/>
</dbReference>
<dbReference type="Pfam" id="PF00016">
    <property type="entry name" value="RuBisCO_large"/>
    <property type="match status" value="1"/>
</dbReference>
<dbReference type="Pfam" id="PF02788">
    <property type="entry name" value="RuBisCO_large_N"/>
    <property type="match status" value="1"/>
</dbReference>
<dbReference type="SFLD" id="SFLDG01052">
    <property type="entry name" value="RuBisCO"/>
    <property type="match status" value="1"/>
</dbReference>
<dbReference type="SFLD" id="SFLDS00014">
    <property type="entry name" value="RuBisCO"/>
    <property type="match status" value="1"/>
</dbReference>
<dbReference type="SFLD" id="SFLDG00301">
    <property type="entry name" value="RuBisCO-like_proteins"/>
    <property type="match status" value="1"/>
</dbReference>
<dbReference type="SUPFAM" id="SSF51649">
    <property type="entry name" value="RuBisCo, C-terminal domain"/>
    <property type="match status" value="1"/>
</dbReference>
<dbReference type="SUPFAM" id="SSF54966">
    <property type="entry name" value="RuBisCO, large subunit, small (N-terminal) domain"/>
    <property type="match status" value="1"/>
</dbReference>
<dbReference type="PROSITE" id="PS00157">
    <property type="entry name" value="RUBISCO_LARGE"/>
    <property type="match status" value="1"/>
</dbReference>
<name>RBL_ONOSE</name>
<keyword id="KW-0113">Calvin cycle</keyword>
<keyword id="KW-0120">Carbon dioxide fixation</keyword>
<keyword id="KW-0150">Chloroplast</keyword>
<keyword id="KW-1015">Disulfide bond</keyword>
<keyword id="KW-0456">Lyase</keyword>
<keyword id="KW-0460">Magnesium</keyword>
<keyword id="KW-0479">Metal-binding</keyword>
<keyword id="KW-0488">Methylation</keyword>
<keyword id="KW-0503">Monooxygenase</keyword>
<keyword id="KW-0560">Oxidoreductase</keyword>
<keyword id="KW-0601">Photorespiration</keyword>
<keyword id="KW-0602">Photosynthesis</keyword>
<keyword id="KW-0934">Plastid</keyword>
<geneLocation type="chloroplast"/>